<proteinExistence type="inferred from homology"/>
<organism>
    <name type="scientific">Salmonella enteritidis PT4 (strain P125109)</name>
    <dbReference type="NCBI Taxonomy" id="550537"/>
    <lineage>
        <taxon>Bacteria</taxon>
        <taxon>Pseudomonadati</taxon>
        <taxon>Pseudomonadota</taxon>
        <taxon>Gammaproteobacteria</taxon>
        <taxon>Enterobacterales</taxon>
        <taxon>Enterobacteriaceae</taxon>
        <taxon>Salmonella</taxon>
    </lineage>
</organism>
<reference key="1">
    <citation type="journal article" date="2008" name="Genome Res.">
        <title>Comparative genome analysis of Salmonella enteritidis PT4 and Salmonella gallinarum 287/91 provides insights into evolutionary and host adaptation pathways.</title>
        <authorList>
            <person name="Thomson N.R."/>
            <person name="Clayton D.J."/>
            <person name="Windhorst D."/>
            <person name="Vernikos G."/>
            <person name="Davidson S."/>
            <person name="Churcher C."/>
            <person name="Quail M.A."/>
            <person name="Stevens M."/>
            <person name="Jones M.A."/>
            <person name="Watson M."/>
            <person name="Barron A."/>
            <person name="Layton A."/>
            <person name="Pickard D."/>
            <person name="Kingsley R.A."/>
            <person name="Bignell A."/>
            <person name="Clark L."/>
            <person name="Harris B."/>
            <person name="Ormond D."/>
            <person name="Abdellah Z."/>
            <person name="Brooks K."/>
            <person name="Cherevach I."/>
            <person name="Chillingworth T."/>
            <person name="Woodward J."/>
            <person name="Norberczak H."/>
            <person name="Lord A."/>
            <person name="Arrowsmith C."/>
            <person name="Jagels K."/>
            <person name="Moule S."/>
            <person name="Mungall K."/>
            <person name="Saunders M."/>
            <person name="Whitehead S."/>
            <person name="Chabalgoity J.A."/>
            <person name="Maskell D."/>
            <person name="Humphreys T."/>
            <person name="Roberts M."/>
            <person name="Barrow P.A."/>
            <person name="Dougan G."/>
            <person name="Parkhill J."/>
        </authorList>
    </citation>
    <scope>NUCLEOTIDE SEQUENCE [LARGE SCALE GENOMIC DNA]</scope>
    <source>
        <strain>P125109</strain>
    </source>
</reference>
<name>GPMB_SALEP</name>
<sequence length="215" mass="23868">MLQVYLVRHGETQWNAERRIQGQSDSPLTAKGEQQAMQVGERARSLGITHIISSDLGRTKRTAEIIAQACGCDITFDSRLRELDMGVLEKRQIDSLTEEEEGWRRQLVNGTQDGRIPGGESMQELSDRVHAALASCLELPQGSRPLLVSHGIALGCLVSTILGLPAWAERRLRLRNCSISRIDYQESQWLASGWVVETAGDVSHLDAPALDELQR</sequence>
<accession>B5R3B7</accession>
<protein>
    <recommendedName>
        <fullName evidence="1">Probable phosphoglycerate mutase GpmB</fullName>
        <ecNumber evidence="1">5.4.2.-</ecNumber>
    </recommendedName>
    <alternativeName>
        <fullName evidence="1">PGAM</fullName>
    </alternativeName>
    <alternativeName>
        <fullName evidence="1">Phosphoglyceromutase</fullName>
    </alternativeName>
</protein>
<gene>
    <name evidence="1" type="primary">gpmB</name>
    <name type="ordered locus">SEN4341</name>
</gene>
<dbReference type="EC" id="5.4.2.-" evidence="1"/>
<dbReference type="EMBL" id="AM933172">
    <property type="protein sequence ID" value="CAR35894.1"/>
    <property type="molecule type" value="Genomic_DNA"/>
</dbReference>
<dbReference type="RefSeq" id="WP_000942363.1">
    <property type="nucleotide sequence ID" value="NC_011294.1"/>
</dbReference>
<dbReference type="SMR" id="B5R3B7"/>
<dbReference type="KEGG" id="set:SEN4341"/>
<dbReference type="HOGENOM" id="CLU_033323_9_5_6"/>
<dbReference type="UniPathway" id="UPA00109">
    <property type="reaction ID" value="UER00186"/>
</dbReference>
<dbReference type="Proteomes" id="UP000000613">
    <property type="component" value="Chromosome"/>
</dbReference>
<dbReference type="GO" id="GO:0005737">
    <property type="term" value="C:cytoplasm"/>
    <property type="evidence" value="ECO:0007669"/>
    <property type="project" value="TreeGrafter"/>
</dbReference>
<dbReference type="GO" id="GO:0016791">
    <property type="term" value="F:phosphatase activity"/>
    <property type="evidence" value="ECO:0007669"/>
    <property type="project" value="TreeGrafter"/>
</dbReference>
<dbReference type="GO" id="GO:0004619">
    <property type="term" value="F:phosphoglycerate mutase activity"/>
    <property type="evidence" value="ECO:0007669"/>
    <property type="project" value="UniProtKB-UniRule"/>
</dbReference>
<dbReference type="GO" id="GO:0006096">
    <property type="term" value="P:glycolytic process"/>
    <property type="evidence" value="ECO:0007669"/>
    <property type="project" value="UniProtKB-UniRule"/>
</dbReference>
<dbReference type="CDD" id="cd07067">
    <property type="entry name" value="HP_PGM_like"/>
    <property type="match status" value="1"/>
</dbReference>
<dbReference type="Gene3D" id="3.40.50.1240">
    <property type="entry name" value="Phosphoglycerate mutase-like"/>
    <property type="match status" value="1"/>
</dbReference>
<dbReference type="HAMAP" id="MF_01040">
    <property type="entry name" value="PGAM_GpmB"/>
    <property type="match status" value="1"/>
</dbReference>
<dbReference type="InterPro" id="IPR013078">
    <property type="entry name" value="His_Pase_superF_clade-1"/>
</dbReference>
<dbReference type="InterPro" id="IPR029033">
    <property type="entry name" value="His_PPase_superfam"/>
</dbReference>
<dbReference type="InterPro" id="IPR001345">
    <property type="entry name" value="PG/BPGM_mutase_AS"/>
</dbReference>
<dbReference type="InterPro" id="IPR050275">
    <property type="entry name" value="PGM_Phosphatase"/>
</dbReference>
<dbReference type="InterPro" id="IPR023086">
    <property type="entry name" value="Phosphoglycerate_mutase_GpmB"/>
</dbReference>
<dbReference type="NCBIfam" id="NF002901">
    <property type="entry name" value="PRK03482.1"/>
    <property type="match status" value="1"/>
</dbReference>
<dbReference type="PANTHER" id="PTHR48100">
    <property type="entry name" value="BROAD-SPECIFICITY PHOSPHATASE YOR283W-RELATED"/>
    <property type="match status" value="1"/>
</dbReference>
<dbReference type="PANTHER" id="PTHR48100:SF1">
    <property type="entry name" value="HISTIDINE PHOSPHATASE FAMILY PROTEIN-RELATED"/>
    <property type="match status" value="1"/>
</dbReference>
<dbReference type="Pfam" id="PF00300">
    <property type="entry name" value="His_Phos_1"/>
    <property type="match status" value="1"/>
</dbReference>
<dbReference type="SMART" id="SM00855">
    <property type="entry name" value="PGAM"/>
    <property type="match status" value="1"/>
</dbReference>
<dbReference type="SUPFAM" id="SSF53254">
    <property type="entry name" value="Phosphoglycerate mutase-like"/>
    <property type="match status" value="1"/>
</dbReference>
<dbReference type="PROSITE" id="PS00175">
    <property type="entry name" value="PG_MUTASE"/>
    <property type="match status" value="1"/>
</dbReference>
<keyword id="KW-0324">Glycolysis</keyword>
<keyword id="KW-0413">Isomerase</keyword>
<comment type="catalytic activity">
    <reaction evidence="1">
        <text>(2R)-2-phosphoglycerate = (2R)-3-phosphoglycerate</text>
        <dbReference type="Rhea" id="RHEA:15901"/>
        <dbReference type="ChEBI" id="CHEBI:58272"/>
        <dbReference type="ChEBI" id="CHEBI:58289"/>
    </reaction>
</comment>
<comment type="pathway">
    <text evidence="1">Carbohydrate degradation; glycolysis; pyruvate from D-glyceraldehyde 3-phosphate: step 3/5.</text>
</comment>
<comment type="similarity">
    <text evidence="1">Belongs to the phosphoglycerate mutase family. GpmB subfamily.</text>
</comment>
<evidence type="ECO:0000255" key="1">
    <source>
        <dbReference type="HAMAP-Rule" id="MF_01040"/>
    </source>
</evidence>
<feature type="chain" id="PRO_1000136013" description="Probable phosphoglycerate mutase GpmB">
    <location>
        <begin position="1"/>
        <end position="215"/>
    </location>
</feature>
<feature type="active site" description="Tele-phosphohistidine intermediate" evidence="1">
    <location>
        <position position="9"/>
    </location>
</feature>
<feature type="active site" description="Proton donor/acceptor" evidence="1">
    <location>
        <position position="82"/>
    </location>
</feature>
<feature type="binding site" evidence="1">
    <location>
        <begin position="8"/>
        <end position="15"/>
    </location>
    <ligand>
        <name>substrate</name>
    </ligand>
</feature>
<feature type="binding site" evidence="1">
    <location>
        <begin position="21"/>
        <end position="22"/>
    </location>
    <ligand>
        <name>substrate</name>
    </ligand>
</feature>
<feature type="binding site" evidence="1">
    <location>
        <position position="58"/>
    </location>
    <ligand>
        <name>substrate</name>
    </ligand>
</feature>
<feature type="binding site" evidence="1">
    <location>
        <position position="60"/>
    </location>
    <ligand>
        <name>substrate</name>
    </ligand>
</feature>
<feature type="binding site" evidence="1">
    <location>
        <begin position="82"/>
        <end position="85"/>
    </location>
    <ligand>
        <name>substrate</name>
    </ligand>
</feature>
<feature type="binding site" evidence="1">
    <location>
        <begin position="104"/>
        <end position="105"/>
    </location>
    <ligand>
        <name>substrate</name>
    </ligand>
</feature>
<feature type="binding site" evidence="1">
    <location>
        <begin position="151"/>
        <end position="152"/>
    </location>
    <ligand>
        <name>substrate</name>
    </ligand>
</feature>
<feature type="site" description="Transition state stabilizer" evidence="1">
    <location>
        <position position="150"/>
    </location>
</feature>